<dbReference type="EC" id="2.7.11.13"/>
<dbReference type="EMBL" id="X75756">
    <property type="protein sequence ID" value="CAA53384.1"/>
    <property type="molecule type" value="mRNA"/>
</dbReference>
<dbReference type="EMBL" id="AK314170">
    <property type="protein sequence ID" value="BAG36853.1"/>
    <property type="molecule type" value="mRNA"/>
</dbReference>
<dbReference type="EMBL" id="AL135858">
    <property type="status" value="NOT_ANNOTATED_CDS"/>
    <property type="molecule type" value="Genomic_DNA"/>
</dbReference>
<dbReference type="EMBL" id="CH471078">
    <property type="protein sequence ID" value="EAW65971.1"/>
    <property type="molecule type" value="Genomic_DNA"/>
</dbReference>
<dbReference type="CCDS" id="CCDS9637.1"/>
<dbReference type="PIR" id="A53215">
    <property type="entry name" value="A53215"/>
</dbReference>
<dbReference type="RefSeq" id="NP_002733.2">
    <property type="nucleotide sequence ID" value="NM_002742.3"/>
</dbReference>
<dbReference type="SMR" id="Q15139"/>
<dbReference type="BioGRID" id="111573">
    <property type="interactions" value="180"/>
</dbReference>
<dbReference type="DIP" id="DIP-38481N"/>
<dbReference type="FunCoup" id="Q15139">
    <property type="interactions" value="1822"/>
</dbReference>
<dbReference type="IntAct" id="Q15139">
    <property type="interactions" value="146"/>
</dbReference>
<dbReference type="STRING" id="9606.ENSP00000390535"/>
<dbReference type="BindingDB" id="Q15139"/>
<dbReference type="ChEMBL" id="CHEMBL3863"/>
<dbReference type="DrugBank" id="DB11752">
    <property type="generic name" value="Bryostatin 1"/>
</dbReference>
<dbReference type="DrugBank" id="DB12010">
    <property type="generic name" value="Fostamatinib"/>
</dbReference>
<dbReference type="DrugCentral" id="Q15139"/>
<dbReference type="GuidetoPHARMACOLOGY" id="1489"/>
<dbReference type="iPTMnet" id="Q15139"/>
<dbReference type="PhosphoSitePlus" id="Q15139"/>
<dbReference type="SwissPalm" id="Q15139"/>
<dbReference type="BioMuta" id="PRKD1"/>
<dbReference type="DMDM" id="209572639"/>
<dbReference type="jPOST" id="Q15139"/>
<dbReference type="MassIVE" id="Q15139"/>
<dbReference type="PaxDb" id="9606-ENSP00000333568"/>
<dbReference type="PeptideAtlas" id="Q15139"/>
<dbReference type="ProteomicsDB" id="60458"/>
<dbReference type="Pumba" id="Q15139"/>
<dbReference type="Antibodypedia" id="4337">
    <property type="antibodies" value="990 antibodies from 40 providers"/>
</dbReference>
<dbReference type="DNASU" id="5587"/>
<dbReference type="Ensembl" id="ENST00000331968.11">
    <property type="protein sequence ID" value="ENSP00000333568.6"/>
    <property type="gene ID" value="ENSG00000184304.17"/>
</dbReference>
<dbReference type="GeneID" id="5587"/>
<dbReference type="KEGG" id="hsa:5587"/>
<dbReference type="MANE-Select" id="ENST00000331968.11">
    <property type="protein sequence ID" value="ENSP00000333568.6"/>
    <property type="RefSeq nucleotide sequence ID" value="NM_002742.3"/>
    <property type="RefSeq protein sequence ID" value="NP_002733.2"/>
</dbReference>
<dbReference type="UCSC" id="uc001wqh.4">
    <property type="organism name" value="human"/>
</dbReference>
<dbReference type="AGR" id="HGNC:9407"/>
<dbReference type="CTD" id="5587"/>
<dbReference type="DisGeNET" id="5587"/>
<dbReference type="GeneCards" id="PRKD1"/>
<dbReference type="HGNC" id="HGNC:9407">
    <property type="gene designation" value="PRKD1"/>
</dbReference>
<dbReference type="HPA" id="ENSG00000184304">
    <property type="expression patterns" value="Low tissue specificity"/>
</dbReference>
<dbReference type="MalaCards" id="PRKD1"/>
<dbReference type="MIM" id="605435">
    <property type="type" value="gene"/>
</dbReference>
<dbReference type="MIM" id="617364">
    <property type="type" value="phenotype"/>
</dbReference>
<dbReference type="neXtProt" id="NX_Q15139"/>
<dbReference type="OpenTargets" id="ENSG00000184304"/>
<dbReference type="Orphanet" id="276145">
    <property type="disease" value="Malignant epithelial tumor of salivary glands"/>
</dbReference>
<dbReference type="PharmGKB" id="PA33771"/>
<dbReference type="VEuPathDB" id="HostDB:ENSG00000184304"/>
<dbReference type="eggNOG" id="KOG4236">
    <property type="taxonomic scope" value="Eukaryota"/>
</dbReference>
<dbReference type="GeneTree" id="ENSGT00950000183024"/>
<dbReference type="HOGENOM" id="CLU_009772_1_0_1"/>
<dbReference type="InParanoid" id="Q15139"/>
<dbReference type="OMA" id="FRHEANS"/>
<dbReference type="OrthoDB" id="74314at2759"/>
<dbReference type="PAN-GO" id="Q15139">
    <property type="GO annotations" value="1 GO annotation based on evolutionary models"/>
</dbReference>
<dbReference type="PhylomeDB" id="Q15139"/>
<dbReference type="TreeFam" id="TF314320"/>
<dbReference type="BRENDA" id="2.7.11.13">
    <property type="organism ID" value="2681"/>
</dbReference>
<dbReference type="PathwayCommons" id="Q15139"/>
<dbReference type="Reactome" id="R-HSA-1660661">
    <property type="pathway name" value="Sphingolipid de novo biosynthesis"/>
</dbReference>
<dbReference type="SignaLink" id="Q15139"/>
<dbReference type="SIGNOR" id="Q15139"/>
<dbReference type="BioGRID-ORCS" id="5587">
    <property type="hits" value="13 hits in 1186 CRISPR screens"/>
</dbReference>
<dbReference type="CD-CODE" id="8C2F96ED">
    <property type="entry name" value="Centrosome"/>
</dbReference>
<dbReference type="ChiTaRS" id="PRKD1">
    <property type="organism name" value="human"/>
</dbReference>
<dbReference type="GeneWiki" id="Protein_kinase_D1"/>
<dbReference type="GenomeRNAi" id="5587"/>
<dbReference type="Pharos" id="Q15139">
    <property type="development level" value="Tchem"/>
</dbReference>
<dbReference type="PRO" id="PR:Q15139"/>
<dbReference type="Proteomes" id="UP000005640">
    <property type="component" value="Chromosome 14"/>
</dbReference>
<dbReference type="RNAct" id="Q15139">
    <property type="molecule type" value="protein"/>
</dbReference>
<dbReference type="Bgee" id="ENSG00000184304">
    <property type="expression patterns" value="Expressed in ventricular zone and 166 other cell types or tissues"/>
</dbReference>
<dbReference type="ExpressionAtlas" id="Q15139">
    <property type="expression patterns" value="baseline and differential"/>
</dbReference>
<dbReference type="GO" id="GO:0000421">
    <property type="term" value="C:autophagosome membrane"/>
    <property type="evidence" value="ECO:0000314"/>
    <property type="project" value="ParkinsonsUK-UCL"/>
</dbReference>
<dbReference type="GO" id="GO:0005938">
    <property type="term" value="C:cell cortex"/>
    <property type="evidence" value="ECO:0007669"/>
    <property type="project" value="Ensembl"/>
</dbReference>
<dbReference type="GO" id="GO:0005911">
    <property type="term" value="C:cell-cell junction"/>
    <property type="evidence" value="ECO:0007669"/>
    <property type="project" value="Ensembl"/>
</dbReference>
<dbReference type="GO" id="GO:0005829">
    <property type="term" value="C:cytosol"/>
    <property type="evidence" value="ECO:0000314"/>
    <property type="project" value="HPA"/>
</dbReference>
<dbReference type="GO" id="GO:0005794">
    <property type="term" value="C:Golgi apparatus"/>
    <property type="evidence" value="ECO:0000314"/>
    <property type="project" value="CACAO"/>
</dbReference>
<dbReference type="GO" id="GO:0005634">
    <property type="term" value="C:nucleus"/>
    <property type="evidence" value="ECO:0007669"/>
    <property type="project" value="Ensembl"/>
</dbReference>
<dbReference type="GO" id="GO:0048471">
    <property type="term" value="C:perinuclear region of cytoplasm"/>
    <property type="evidence" value="ECO:0007669"/>
    <property type="project" value="Ensembl"/>
</dbReference>
<dbReference type="GO" id="GO:0005886">
    <property type="term" value="C:plasma membrane"/>
    <property type="evidence" value="ECO:0000314"/>
    <property type="project" value="HPA"/>
</dbReference>
<dbReference type="GO" id="GO:0005802">
    <property type="term" value="C:trans-Golgi network"/>
    <property type="evidence" value="ECO:0000314"/>
    <property type="project" value="UniProtKB"/>
</dbReference>
<dbReference type="GO" id="GO:0030018">
    <property type="term" value="C:Z disc"/>
    <property type="evidence" value="ECO:0007669"/>
    <property type="project" value="Ensembl"/>
</dbReference>
<dbReference type="GO" id="GO:0005524">
    <property type="term" value="F:ATP binding"/>
    <property type="evidence" value="ECO:0007669"/>
    <property type="project" value="UniProtKB-KW"/>
</dbReference>
<dbReference type="GO" id="GO:0004697">
    <property type="term" value="F:diacylglycerol-dependent serine/threonine kinase activity"/>
    <property type="evidence" value="ECO:0000314"/>
    <property type="project" value="CACAO"/>
</dbReference>
<dbReference type="GO" id="GO:0031072">
    <property type="term" value="F:heat shock protein binding"/>
    <property type="evidence" value="ECO:0007669"/>
    <property type="project" value="Ensembl"/>
</dbReference>
<dbReference type="GO" id="GO:0042802">
    <property type="term" value="F:identical protein binding"/>
    <property type="evidence" value="ECO:0000353"/>
    <property type="project" value="IntAct"/>
</dbReference>
<dbReference type="GO" id="GO:0016301">
    <property type="term" value="F:kinase activity"/>
    <property type="evidence" value="ECO:0000314"/>
    <property type="project" value="UniProtKB"/>
</dbReference>
<dbReference type="GO" id="GO:0141038">
    <property type="term" value="F:phosphatidylinositol 3-kinase activator activity"/>
    <property type="evidence" value="ECO:0000314"/>
    <property type="project" value="ParkinsonsUK-UCL"/>
</dbReference>
<dbReference type="GO" id="GO:0005080">
    <property type="term" value="F:protein kinase C binding"/>
    <property type="evidence" value="ECO:0007669"/>
    <property type="project" value="Ensembl"/>
</dbReference>
<dbReference type="GO" id="GO:0106310">
    <property type="term" value="F:protein serine kinase activity"/>
    <property type="evidence" value="ECO:0000316"/>
    <property type="project" value="BHF-UCL"/>
</dbReference>
<dbReference type="GO" id="GO:0004674">
    <property type="term" value="F:protein serine/threonine kinase activity"/>
    <property type="evidence" value="ECO:0000314"/>
    <property type="project" value="BHF-UCL"/>
</dbReference>
<dbReference type="GO" id="GO:0008270">
    <property type="term" value="F:zinc ion binding"/>
    <property type="evidence" value="ECO:0007669"/>
    <property type="project" value="UniProtKB-KW"/>
</dbReference>
<dbReference type="GO" id="GO:0001525">
    <property type="term" value="P:angiogenesis"/>
    <property type="evidence" value="ECO:0007669"/>
    <property type="project" value="UniProtKB-KW"/>
</dbReference>
<dbReference type="GO" id="GO:0006915">
    <property type="term" value="P:apoptotic process"/>
    <property type="evidence" value="ECO:0007669"/>
    <property type="project" value="UniProtKB-KW"/>
</dbReference>
<dbReference type="GO" id="GO:0030154">
    <property type="term" value="P:cell differentiation"/>
    <property type="evidence" value="ECO:0007669"/>
    <property type="project" value="UniProtKB-KW"/>
</dbReference>
<dbReference type="GO" id="GO:0034198">
    <property type="term" value="P:cellular response to amino acid starvation"/>
    <property type="evidence" value="ECO:0000315"/>
    <property type="project" value="ParkinsonsUK-UCL"/>
</dbReference>
<dbReference type="GO" id="GO:1904385">
    <property type="term" value="P:cellular response to angiotensin"/>
    <property type="evidence" value="ECO:0007669"/>
    <property type="project" value="Ensembl"/>
</dbReference>
<dbReference type="GO" id="GO:1990859">
    <property type="term" value="P:cellular response to endothelin"/>
    <property type="evidence" value="ECO:0007669"/>
    <property type="project" value="Ensembl"/>
</dbReference>
<dbReference type="GO" id="GO:0071447">
    <property type="term" value="P:cellular response to hydroperoxide"/>
    <property type="evidence" value="ECO:0000315"/>
    <property type="project" value="ParkinsonsUK-UCL"/>
</dbReference>
<dbReference type="GO" id="GO:0071874">
    <property type="term" value="P:cellular response to norepinephrine stimulus"/>
    <property type="evidence" value="ECO:0007669"/>
    <property type="project" value="Ensembl"/>
</dbReference>
<dbReference type="GO" id="GO:0034599">
    <property type="term" value="P:cellular response to oxidative stress"/>
    <property type="evidence" value="ECO:0000314"/>
    <property type="project" value="UniProtKB"/>
</dbReference>
<dbReference type="GO" id="GO:1904628">
    <property type="term" value="P:cellular response to phorbol 13-acetate 12-myristate"/>
    <property type="evidence" value="ECO:0007669"/>
    <property type="project" value="Ensembl"/>
</dbReference>
<dbReference type="GO" id="GO:0035924">
    <property type="term" value="P:cellular response to vascular endothelial growth factor stimulus"/>
    <property type="evidence" value="ECO:0000315"/>
    <property type="project" value="UniProtKB"/>
</dbReference>
<dbReference type="GO" id="GO:0050829">
    <property type="term" value="P:defense response to Gram-negative bacterium"/>
    <property type="evidence" value="ECO:0007669"/>
    <property type="project" value="Ensembl"/>
</dbReference>
<dbReference type="GO" id="GO:0007030">
    <property type="term" value="P:Golgi organization"/>
    <property type="evidence" value="ECO:0000315"/>
    <property type="project" value="UniProtKB"/>
</dbReference>
<dbReference type="GO" id="GO:0048193">
    <property type="term" value="P:Golgi vesicle transport"/>
    <property type="evidence" value="ECO:0000250"/>
    <property type="project" value="UniProtKB"/>
</dbReference>
<dbReference type="GO" id="GO:0006954">
    <property type="term" value="P:inflammatory response"/>
    <property type="evidence" value="ECO:0007669"/>
    <property type="project" value="UniProtKB-KW"/>
</dbReference>
<dbReference type="GO" id="GO:0045087">
    <property type="term" value="P:innate immune response"/>
    <property type="evidence" value="ECO:0007669"/>
    <property type="project" value="UniProtKB-KW"/>
</dbReference>
<dbReference type="GO" id="GO:0007229">
    <property type="term" value="P:integrin-mediated signaling pathway"/>
    <property type="evidence" value="ECO:0000304"/>
    <property type="project" value="BHF-UCL"/>
</dbReference>
<dbReference type="GO" id="GO:0035556">
    <property type="term" value="P:intracellular signal transduction"/>
    <property type="evidence" value="ECO:0000315"/>
    <property type="project" value="BHF-UCL"/>
</dbReference>
<dbReference type="GO" id="GO:0045806">
    <property type="term" value="P:negative regulation of endocytosis"/>
    <property type="evidence" value="ECO:0000304"/>
    <property type="project" value="BHF-UCL"/>
</dbReference>
<dbReference type="GO" id="GO:0007399">
    <property type="term" value="P:nervous system development"/>
    <property type="evidence" value="ECO:0007669"/>
    <property type="project" value="UniProtKB-KW"/>
</dbReference>
<dbReference type="GO" id="GO:0018105">
    <property type="term" value="P:peptidyl-serine phosphorylation"/>
    <property type="evidence" value="ECO:0000315"/>
    <property type="project" value="UniProtKB"/>
</dbReference>
<dbReference type="GO" id="GO:0018107">
    <property type="term" value="P:peptidyl-threonine phosphorylation"/>
    <property type="evidence" value="ECO:0000315"/>
    <property type="project" value="UniProtKB"/>
</dbReference>
<dbReference type="GO" id="GO:0007200">
    <property type="term" value="P:phospholipase C-activating G protein-coupled receptor signaling pathway"/>
    <property type="evidence" value="ECO:0000318"/>
    <property type="project" value="GO_Central"/>
</dbReference>
<dbReference type="GO" id="GO:0045766">
    <property type="term" value="P:positive regulation of angiogenesis"/>
    <property type="evidence" value="ECO:0000315"/>
    <property type="project" value="UniProtKB"/>
</dbReference>
<dbReference type="GO" id="GO:0010508">
    <property type="term" value="P:positive regulation of autophagy"/>
    <property type="evidence" value="ECO:0000315"/>
    <property type="project" value="ParkinsonsUK-UCL"/>
</dbReference>
<dbReference type="GO" id="GO:0043536">
    <property type="term" value="P:positive regulation of blood vessel endothelial cell migration"/>
    <property type="evidence" value="ECO:0000315"/>
    <property type="project" value="BHF-UCL"/>
</dbReference>
<dbReference type="GO" id="GO:0043123">
    <property type="term" value="P:positive regulation of canonical NF-kappaB signal transduction"/>
    <property type="evidence" value="ECO:0000315"/>
    <property type="project" value="UniProtKB"/>
</dbReference>
<dbReference type="GO" id="GO:0045793">
    <property type="term" value="P:positive regulation of cell size"/>
    <property type="evidence" value="ECO:0007669"/>
    <property type="project" value="Ensembl"/>
</dbReference>
<dbReference type="GO" id="GO:2001028">
    <property type="term" value="P:positive regulation of endothelial cell chemotaxis"/>
    <property type="evidence" value="ECO:0000315"/>
    <property type="project" value="BHF-UCL"/>
</dbReference>
<dbReference type="GO" id="GO:0010595">
    <property type="term" value="P:positive regulation of endothelial cell migration"/>
    <property type="evidence" value="ECO:0000315"/>
    <property type="project" value="UniProtKB"/>
</dbReference>
<dbReference type="GO" id="GO:0001938">
    <property type="term" value="P:positive regulation of endothelial cell proliferation"/>
    <property type="evidence" value="ECO:0000316"/>
    <property type="project" value="BHF-UCL"/>
</dbReference>
<dbReference type="GO" id="GO:0010628">
    <property type="term" value="P:positive regulation of gene expression"/>
    <property type="evidence" value="ECO:0007669"/>
    <property type="project" value="Ensembl"/>
</dbReference>
<dbReference type="GO" id="GO:0010976">
    <property type="term" value="P:positive regulation of neuron projection development"/>
    <property type="evidence" value="ECO:0000315"/>
    <property type="project" value="UniProtKB"/>
</dbReference>
<dbReference type="GO" id="GO:0051092">
    <property type="term" value="P:positive regulation of NF-kappaB transcription factor activity"/>
    <property type="evidence" value="ECO:0000315"/>
    <property type="project" value="UniProtKB"/>
</dbReference>
<dbReference type="GO" id="GO:1900227">
    <property type="term" value="P:positive regulation of NLRP3 inflammasome complex assembly"/>
    <property type="evidence" value="ECO:0000250"/>
    <property type="project" value="UniProtKB"/>
</dbReference>
<dbReference type="GO" id="GO:0045669">
    <property type="term" value="P:positive regulation of osteoblast differentiation"/>
    <property type="evidence" value="ECO:0000250"/>
    <property type="project" value="UniProtKB"/>
</dbReference>
<dbReference type="GO" id="GO:0090277">
    <property type="term" value="P:positive regulation of peptide hormone secretion"/>
    <property type="evidence" value="ECO:0007669"/>
    <property type="project" value="Ensembl"/>
</dbReference>
<dbReference type="GO" id="GO:0051897">
    <property type="term" value="P:positive regulation of phosphatidylinositol 3-kinase/protein kinase B signal transduction"/>
    <property type="evidence" value="ECO:0000314"/>
    <property type="project" value="ParkinsonsUK-UCL"/>
</dbReference>
<dbReference type="GO" id="GO:0046827">
    <property type="term" value="P:positive regulation of protein export from nucleus"/>
    <property type="evidence" value="ECO:0007669"/>
    <property type="project" value="Ensembl"/>
</dbReference>
<dbReference type="GO" id="GO:0042307">
    <property type="term" value="P:positive regulation of protein import into nucleus"/>
    <property type="evidence" value="ECO:0007669"/>
    <property type="project" value="Ensembl"/>
</dbReference>
<dbReference type="GO" id="GO:0060298">
    <property type="term" value="P:positive regulation of sarcomere organization"/>
    <property type="evidence" value="ECO:0007669"/>
    <property type="project" value="Ensembl"/>
</dbReference>
<dbReference type="GO" id="GO:0045944">
    <property type="term" value="P:positive regulation of transcription by RNA polymerase II"/>
    <property type="evidence" value="ECO:0000315"/>
    <property type="project" value="BHF-UCL"/>
</dbReference>
<dbReference type="GO" id="GO:0046777">
    <property type="term" value="P:protein autophosphorylation"/>
    <property type="evidence" value="ECO:0000314"/>
    <property type="project" value="UniProtKB"/>
</dbReference>
<dbReference type="GO" id="GO:2001044">
    <property type="term" value="P:regulation of integrin-mediated signaling pathway"/>
    <property type="evidence" value="ECO:0000304"/>
    <property type="project" value="BHF-UCL"/>
</dbReference>
<dbReference type="GO" id="GO:0010837">
    <property type="term" value="P:regulation of keratinocyte proliferation"/>
    <property type="evidence" value="ECO:0000250"/>
    <property type="project" value="UniProtKB"/>
</dbReference>
<dbReference type="GO" id="GO:0051279">
    <property type="term" value="P:regulation of release of sequestered calcium ion into cytosol"/>
    <property type="evidence" value="ECO:0007669"/>
    <property type="project" value="Ensembl"/>
</dbReference>
<dbReference type="GO" id="GO:0014723">
    <property type="term" value="P:regulation of skeletal muscle contraction by modulation of calcium ion sensitivity of myofibril"/>
    <property type="evidence" value="ECO:0007669"/>
    <property type="project" value="Ensembl"/>
</dbReference>
<dbReference type="GO" id="GO:0007165">
    <property type="term" value="P:signal transduction"/>
    <property type="evidence" value="ECO:0000304"/>
    <property type="project" value="ProtInc"/>
</dbReference>
<dbReference type="GO" id="GO:0030148">
    <property type="term" value="P:sphingolipid biosynthetic process"/>
    <property type="evidence" value="ECO:0000304"/>
    <property type="project" value="Reactome"/>
</dbReference>
<dbReference type="GO" id="GO:0048010">
    <property type="term" value="P:vascular endothelial growth factor receptor signaling pathway"/>
    <property type="evidence" value="ECO:0000315"/>
    <property type="project" value="BHF-UCL"/>
</dbReference>
<dbReference type="CDD" id="cd20839">
    <property type="entry name" value="C1_PKD1_rpt1"/>
    <property type="match status" value="1"/>
</dbReference>
<dbReference type="CDD" id="cd20842">
    <property type="entry name" value="C1_PKD1_rpt2"/>
    <property type="match status" value="1"/>
</dbReference>
<dbReference type="CDD" id="cd01239">
    <property type="entry name" value="PH_PKD"/>
    <property type="match status" value="1"/>
</dbReference>
<dbReference type="CDD" id="cd14082">
    <property type="entry name" value="STKc_PKD"/>
    <property type="match status" value="1"/>
</dbReference>
<dbReference type="FunFam" id="1.10.510.10:FF:000151">
    <property type="entry name" value="Serine/threonine-protein kinase"/>
    <property type="match status" value="1"/>
</dbReference>
<dbReference type="FunFam" id="2.30.29.30:FF:000056">
    <property type="entry name" value="Serine/threonine-protein kinase"/>
    <property type="match status" value="1"/>
</dbReference>
<dbReference type="FunFam" id="3.30.200.20:FF:000137">
    <property type="entry name" value="Serine/threonine-protein kinase"/>
    <property type="match status" value="1"/>
</dbReference>
<dbReference type="FunFam" id="3.30.60.20:FF:000007">
    <property type="entry name" value="Serine/threonine-protein kinase"/>
    <property type="match status" value="1"/>
</dbReference>
<dbReference type="FunFam" id="3.30.60.20:FF:000019">
    <property type="entry name" value="Serine/threonine-protein kinase"/>
    <property type="match status" value="1"/>
</dbReference>
<dbReference type="Gene3D" id="3.30.60.20">
    <property type="match status" value="2"/>
</dbReference>
<dbReference type="Gene3D" id="2.30.29.30">
    <property type="entry name" value="Pleckstrin-homology domain (PH domain)/Phosphotyrosine-binding domain (PTB)"/>
    <property type="match status" value="1"/>
</dbReference>
<dbReference type="Gene3D" id="1.10.510.10">
    <property type="entry name" value="Transferase(Phosphotransferase) domain 1"/>
    <property type="match status" value="1"/>
</dbReference>
<dbReference type="InterPro" id="IPR046349">
    <property type="entry name" value="C1-like_sf"/>
</dbReference>
<dbReference type="InterPro" id="IPR020454">
    <property type="entry name" value="DAG/PE-bd"/>
</dbReference>
<dbReference type="InterPro" id="IPR011009">
    <property type="entry name" value="Kinase-like_dom_sf"/>
</dbReference>
<dbReference type="InterPro" id="IPR002219">
    <property type="entry name" value="PE/DAG-bd"/>
</dbReference>
<dbReference type="InterPro" id="IPR011993">
    <property type="entry name" value="PH-like_dom_sf"/>
</dbReference>
<dbReference type="InterPro" id="IPR001849">
    <property type="entry name" value="PH_domain"/>
</dbReference>
<dbReference type="InterPro" id="IPR000719">
    <property type="entry name" value="Prot_kinase_dom"/>
</dbReference>
<dbReference type="InterPro" id="IPR017441">
    <property type="entry name" value="Protein_kinase_ATP_BS"/>
</dbReference>
<dbReference type="InterPro" id="IPR015727">
    <property type="entry name" value="Protein_Kinase_C_mu-related"/>
</dbReference>
<dbReference type="InterPro" id="IPR008271">
    <property type="entry name" value="Ser/Thr_kinase_AS"/>
</dbReference>
<dbReference type="PANTHER" id="PTHR22968">
    <property type="entry name" value="PROTEIN KINASE C, MU"/>
    <property type="match status" value="1"/>
</dbReference>
<dbReference type="PANTHER" id="PTHR22968:SF9">
    <property type="entry name" value="SERINE_THREONINE-PROTEIN KINASE D1"/>
    <property type="match status" value="1"/>
</dbReference>
<dbReference type="Pfam" id="PF00130">
    <property type="entry name" value="C1_1"/>
    <property type="match status" value="2"/>
</dbReference>
<dbReference type="Pfam" id="PF00169">
    <property type="entry name" value="PH"/>
    <property type="match status" value="1"/>
</dbReference>
<dbReference type="Pfam" id="PF00069">
    <property type="entry name" value="Pkinase"/>
    <property type="match status" value="1"/>
</dbReference>
<dbReference type="PIRSF" id="PIRSF000552">
    <property type="entry name" value="PKC_mu_nu_D2"/>
    <property type="match status" value="1"/>
</dbReference>
<dbReference type="PRINTS" id="PR00008">
    <property type="entry name" value="DAGPEDOMAIN"/>
</dbReference>
<dbReference type="SMART" id="SM00109">
    <property type="entry name" value="C1"/>
    <property type="match status" value="2"/>
</dbReference>
<dbReference type="SMART" id="SM00233">
    <property type="entry name" value="PH"/>
    <property type="match status" value="1"/>
</dbReference>
<dbReference type="SMART" id="SM00220">
    <property type="entry name" value="S_TKc"/>
    <property type="match status" value="1"/>
</dbReference>
<dbReference type="SUPFAM" id="SSF57889">
    <property type="entry name" value="Cysteine-rich domain"/>
    <property type="match status" value="2"/>
</dbReference>
<dbReference type="SUPFAM" id="SSF50729">
    <property type="entry name" value="PH domain-like"/>
    <property type="match status" value="1"/>
</dbReference>
<dbReference type="SUPFAM" id="SSF56112">
    <property type="entry name" value="Protein kinase-like (PK-like)"/>
    <property type="match status" value="1"/>
</dbReference>
<dbReference type="PROSITE" id="PS50003">
    <property type="entry name" value="PH_DOMAIN"/>
    <property type="match status" value="1"/>
</dbReference>
<dbReference type="PROSITE" id="PS00107">
    <property type="entry name" value="PROTEIN_KINASE_ATP"/>
    <property type="match status" value="1"/>
</dbReference>
<dbReference type="PROSITE" id="PS50011">
    <property type="entry name" value="PROTEIN_KINASE_DOM"/>
    <property type="match status" value="1"/>
</dbReference>
<dbReference type="PROSITE" id="PS00108">
    <property type="entry name" value="PROTEIN_KINASE_ST"/>
    <property type="match status" value="1"/>
</dbReference>
<dbReference type="PROSITE" id="PS00479">
    <property type="entry name" value="ZF_DAG_PE_1"/>
    <property type="match status" value="2"/>
</dbReference>
<dbReference type="PROSITE" id="PS50081">
    <property type="entry name" value="ZF_DAG_PE_2"/>
    <property type="match status" value="2"/>
</dbReference>
<evidence type="ECO:0000250" key="1">
    <source>
        <dbReference type="UniProtKB" id="Q62101"/>
    </source>
</evidence>
<evidence type="ECO:0000250" key="2">
    <source>
        <dbReference type="UniProtKB" id="Q8BZ03"/>
    </source>
</evidence>
<evidence type="ECO:0000250" key="3">
    <source>
        <dbReference type="UniProtKB" id="Q8K1Y2"/>
    </source>
</evidence>
<evidence type="ECO:0000250" key="4">
    <source>
        <dbReference type="UniProtKB" id="Q9BZL6"/>
    </source>
</evidence>
<evidence type="ECO:0000255" key="5">
    <source>
        <dbReference type="PROSITE-ProRule" id="PRU00145"/>
    </source>
</evidence>
<evidence type="ECO:0000255" key="6">
    <source>
        <dbReference type="PROSITE-ProRule" id="PRU00159"/>
    </source>
</evidence>
<evidence type="ECO:0000255" key="7">
    <source>
        <dbReference type="PROSITE-ProRule" id="PRU00226"/>
    </source>
</evidence>
<evidence type="ECO:0000255" key="8">
    <source>
        <dbReference type="PROSITE-ProRule" id="PRU10027"/>
    </source>
</evidence>
<evidence type="ECO:0000256" key="9">
    <source>
        <dbReference type="SAM" id="MobiDB-lite"/>
    </source>
</evidence>
<evidence type="ECO:0000269" key="10">
    <source>
    </source>
</evidence>
<evidence type="ECO:0000269" key="11">
    <source>
    </source>
</evidence>
<evidence type="ECO:0000269" key="12">
    <source>
    </source>
</evidence>
<evidence type="ECO:0000269" key="13">
    <source>
    </source>
</evidence>
<evidence type="ECO:0000269" key="14">
    <source>
    </source>
</evidence>
<evidence type="ECO:0000269" key="15">
    <source>
    </source>
</evidence>
<evidence type="ECO:0000269" key="16">
    <source>
    </source>
</evidence>
<evidence type="ECO:0000269" key="17">
    <source>
    </source>
</evidence>
<evidence type="ECO:0000269" key="18">
    <source>
    </source>
</evidence>
<evidence type="ECO:0000269" key="19">
    <source>
    </source>
</evidence>
<evidence type="ECO:0000269" key="20">
    <source>
    </source>
</evidence>
<evidence type="ECO:0000269" key="21">
    <source>
    </source>
</evidence>
<evidence type="ECO:0000269" key="22">
    <source>
    </source>
</evidence>
<evidence type="ECO:0000269" key="23">
    <source>
    </source>
</evidence>
<evidence type="ECO:0000269" key="24">
    <source>
    </source>
</evidence>
<evidence type="ECO:0000269" key="25">
    <source>
    </source>
</evidence>
<evidence type="ECO:0000269" key="26">
    <source>
    </source>
</evidence>
<evidence type="ECO:0000269" key="27">
    <source>
    </source>
</evidence>
<evidence type="ECO:0000269" key="28">
    <source>
    </source>
</evidence>
<evidence type="ECO:0000305" key="29"/>
<evidence type="ECO:0007744" key="30">
    <source>
    </source>
</evidence>
<evidence type="ECO:0007744" key="31">
    <source>
    </source>
</evidence>
<gene>
    <name type="primary">PRKD1</name>
    <name type="synonym">PKD</name>
    <name type="synonym">PKD1</name>
    <name type="synonym">PRKCM</name>
</gene>
<comment type="function">
    <text evidence="1 10 11 12 13 16 19 23 24 25 26 27">Serine/threonine-protein kinase that converts transient diacylglycerol (DAG) signals into prolonged physiological effects downstream of PKC, and is involved in the regulation of MAPK8/JNK1 and Ras signaling, Golgi membrane integrity and trafficking, cell survival through NF-kappa-B activation, cell migration, cell differentiation by mediating HDAC7 nuclear export, cell proliferation via MAPK1/3 (ERK1/2) signaling, and plays a role in cardiac hypertrophy, VEGFA-induced angiogenesis, genotoxic-induced apoptosis and flagellin-stimulated inflammatory response (PubMed:10764790, PubMed:12505989, PubMed:12637538, PubMed:17442957, PubMed:18509061, PubMed:19135240, PubMed:19211839). Phosphorylates the epidermal growth factor receptor (EGFR) on dual threonine residues, which leads to the suppression of epidermal growth factor (EGF)-induced MAPK8/JNK1 activation and subsequent JUN phosphorylation (PubMed:10523301). Phosphorylates RIN1, inducing RIN1 binding to 14-3-3 proteins YWHAB, YWHAE and YWHAZ and increased competition with RAF1 for binding to GTP-bound form of Ras proteins (NRAS, HRAS and KRAS). Acts downstream of the heterotrimeric G-protein beta/gamma-subunit complex to maintain the structural integrity of the Golgi membranes, and is required for protein transport along the secretory pathway. In the trans-Golgi network (TGN), regulates the fission of transport vesicles that are on their way to the plasma membrane. May act by activating the lipid kinase phosphatidylinositol 4-kinase beta (PI4KB) at the TGN for the local synthesis of phosphorylated inositol lipids, which induces a sequential production of DAG, phosphatidic acid (PA) and lyso-PA (LPA) that are necessary for membrane fission and generation of specific transport carriers to the cell surface. Under oxidative stress, is phosphorylated at Tyr-463 via SRC-ABL1 and contributes to cell survival by activating IKK complex and subsequent nuclear translocation and activation of NFKB1 (PubMed:12505989). Involved in cell migration by regulating integrin alpha-5/beta-3 recycling and promoting its recruitment in newly forming focal adhesion. In osteoblast differentiation, mediates the bone morphogenetic protein 2 (BMP2)-induced nuclear export of HDAC7, which results in the inhibition of HDAC7 transcriptional repression of RUNX2 (PubMed:18509061). In neurons, plays an important role in neuronal polarity by regulating the biogenesis of TGN-derived dendritic vesicles, and is involved in the maintenance of dendritic arborization and Golgi structure in hippocampal cells. May potentiate mitogenesis induced by the neuropeptide bombesin or vasopressin by mediating an increase in the duration of MAPK1/3 (ERK1/2) signaling, which leads to accumulation of immediate-early gene products including FOS that stimulate cell cycle progression. Plays an important role in the proliferative response induced by low calcium in keratinocytes, through sustained activation of MAPK1/3 (ERK1/2) pathway. Downstream of novel PKC signaling, plays a role in cardiac hypertrophy by phosphorylating HDAC5, which in turn triggers XPO1/CRM1-dependent nuclear export of HDAC5, MEF2A transcriptional activation and induction of downstream target genes that promote myocyte hypertrophy and pathological cardiac remodeling (PubMed:18332134). Mediates cardiac troponin I (TNNI3) phosphorylation at the PKA sites, which results in reduced myofilament calcium sensitivity, and accelerated crossbridge cycling kinetics. The PRKD1-HDAC5 pathway is also involved in angiogenesis by mediating VEGFA-induced specific subset of gene expression, cell migration, and tube formation (PubMed:19211839). In response to VEGFA, is necessary and required for HDAC7 phosphorylation which induces HDAC7 nuclear export and endothelial cell proliferation and migration. During apoptosis induced by cytarabine and other genotoxic agents, PRKD1 is cleaved by caspase-3 at Asp-378, resulting in activation of its kinase function and increased sensitivity of cells to the cytotoxic effects of genotoxic agents (PubMed:10764790). In epithelial cells, is required for transducing flagellin-stimulated inflammatory responses by binding and phosphorylating TLR5, which contributes to MAPK14/p38 activation and production of inflammatory cytokines (PubMed:17442957). Acts as an activator of NLRP3 inflammasome assembly by mediating phosphorylation of NLRP3 (By similarity). May play a role in inflammatory response by mediating activation of NF-kappa-B. May be involved in pain transmission by directly modulating TRPV1 receptor (PubMed:15471852). Plays a role in activated KRAS-mediated stabilization of ZNF304 in colorectal cancer (CRC) cells (PubMed:24623306). Regulates nuclear translocation of transcription factor TFEB in macrophages upon live S.enterica infection (By similarity).</text>
</comment>
<comment type="catalytic activity">
    <reaction>
        <text>L-seryl-[protein] + ATP = O-phospho-L-seryl-[protein] + ADP + H(+)</text>
        <dbReference type="Rhea" id="RHEA:17989"/>
        <dbReference type="Rhea" id="RHEA-COMP:9863"/>
        <dbReference type="Rhea" id="RHEA-COMP:11604"/>
        <dbReference type="ChEBI" id="CHEBI:15378"/>
        <dbReference type="ChEBI" id="CHEBI:29999"/>
        <dbReference type="ChEBI" id="CHEBI:30616"/>
        <dbReference type="ChEBI" id="CHEBI:83421"/>
        <dbReference type="ChEBI" id="CHEBI:456216"/>
        <dbReference type="EC" id="2.7.11.13"/>
    </reaction>
</comment>
<comment type="catalytic activity">
    <reaction>
        <text>L-threonyl-[protein] + ATP = O-phospho-L-threonyl-[protein] + ADP + H(+)</text>
        <dbReference type="Rhea" id="RHEA:46608"/>
        <dbReference type="Rhea" id="RHEA-COMP:11060"/>
        <dbReference type="Rhea" id="RHEA-COMP:11605"/>
        <dbReference type="ChEBI" id="CHEBI:15378"/>
        <dbReference type="ChEBI" id="CHEBI:30013"/>
        <dbReference type="ChEBI" id="CHEBI:30616"/>
        <dbReference type="ChEBI" id="CHEBI:61977"/>
        <dbReference type="ChEBI" id="CHEBI:456216"/>
        <dbReference type="EC" id="2.7.11.13"/>
    </reaction>
</comment>
<comment type="cofactor">
    <cofactor>
        <name>Mg(2+)</name>
        <dbReference type="ChEBI" id="CHEBI:18420"/>
    </cofactor>
</comment>
<comment type="activity regulation">
    <text evidence="13 20 22">Activated by DAG and phorbol esters. Phorbol-ester/DAG-type domain 1 binds DAG with high affinity and appears to play the dominant role in mediating translocation to the cell membrane and trans-Golgi network. Phorbol-ester/DAG-type domain 2 binds phorbol ester with higher affinity. Autophosphorylation of Ser-742 and phosphorylation of Ser-738 by PKC relieves auto-inhibition by the PH domain. Phosphorylation on Tyr-463 by the SRC-ABL1 pathway in response to oxidative stress, is also required for activation. Activated by DAPK1 under oxidative stress.</text>
</comment>
<comment type="subunit">
    <text evidence="1 14 20 25 27">Interacts (via N-terminus) with ADAP1/CENTA1 (PubMed:12893243). Interacts with MAPK13 (PubMed:19135240). Interacts with DAPK1 in an oxidative stress-regulated manner (PubMed:17703233). Interacts with USP28; the interaction induces phosphorylation of USP28 and activated KRAS-mediated stabilization of ZNF304 (PubMed:24623306). Interacts with AKAP13 (via C-terminal domain) (By similarity).</text>
</comment>
<comment type="interaction">
    <interactant intactId="EBI-1181072">
        <id>Q15139</id>
    </interactant>
    <interactant intactId="EBI-2808808">
        <id>P53367</id>
        <label>ARFIP1</label>
    </interactant>
    <organismsDiffer>false</organismsDiffer>
    <experiments>2</experiments>
</comment>
<comment type="interaction">
    <interactant intactId="EBI-1181072">
        <id>Q15139</id>
    </interactant>
    <interactant intactId="EBI-347528">
        <id>Q07021</id>
        <label>C1QBP</label>
    </interactant>
    <organismsDiffer>false</organismsDiffer>
    <experiments>9</experiments>
</comment>
<comment type="interaction">
    <interactant intactId="EBI-1181072">
        <id>Q15139</id>
    </interactant>
    <interactant intactId="EBI-727477">
        <id>P12830</id>
        <label>CDH1</label>
    </interactant>
    <organismsDiffer>false</organismsDiffer>
    <experiments>7</experiments>
</comment>
<comment type="interaction">
    <interactant intactId="EBI-1181072">
        <id>Q15139</id>
    </interactant>
    <interactant intactId="EBI-352572">
        <id>P08238</id>
        <label>HSP90AB1</label>
    </interactant>
    <organismsDiffer>false</organismsDiffer>
    <experiments>2</experiments>
</comment>
<comment type="interaction">
    <interactant intactId="EBI-1181072">
        <id>Q15139</id>
    </interactant>
    <interactant intactId="EBI-2116951">
        <id>O15264</id>
        <label>MAPK13</label>
    </interactant>
    <organismsDiffer>false</organismsDiffer>
    <experiments>6</experiments>
</comment>
<comment type="interaction">
    <interactant intactId="EBI-1181072">
        <id>Q15139</id>
    </interactant>
    <interactant intactId="EBI-996616">
        <id>P02795</id>
        <label>MT2A</label>
    </interactant>
    <organismsDiffer>false</organismsDiffer>
    <experiments>7</experiments>
</comment>
<comment type="interaction">
    <interactant intactId="EBI-1181072">
        <id>Q15139</id>
    </interactant>
    <interactant intactId="EBI-1181072">
        <id>Q15139</id>
        <label>PRKD1</label>
    </interactant>
    <organismsDiffer>false</organismsDiffer>
    <experiments>2</experiments>
</comment>
<comment type="interaction">
    <interactant intactId="EBI-1181072">
        <id>Q15139</id>
    </interactant>
    <interactant intactId="EBI-15705168">
        <id>Q8C2B3-1</id>
        <label>Hdac7</label>
    </interactant>
    <organismsDiffer>true</organismsDiffer>
    <experiments>3</experiments>
</comment>
<comment type="subcellular location">
    <subcellularLocation>
        <location evidence="22">Cytoplasm</location>
    </subcellularLocation>
    <subcellularLocation>
        <location evidence="22">Cell membrane</location>
    </subcellularLocation>
    <subcellularLocation>
        <location evidence="1">Golgi apparatus</location>
        <location evidence="1">trans-Golgi network</location>
    </subcellularLocation>
    <text>Translocation to the cell membrane is required for kinase activation.</text>
</comment>
<comment type="induction">
    <text evidence="27">Up-regulated by the intestine-specific transcription factor CDX1 in an activated KRAS-dependent manner in colorectal cancer (CRC) cells (PubMed:24623306).</text>
</comment>
<comment type="PTM">
    <text evidence="1 13 15 20 21 25">Phosphorylated at Ser-397 and Ser-401 by MAPK13 during regulation of insulin secretion in pancreatic beta cells (PubMed:19135240). Phosphorylated by DAPK1 (PubMed:17703233). Phosphorylated at Tyr-95 and by ABL at Tyr-463, which primes the kinase in response to oxidative stress, and promotes a second step activating phosphorylation at Ser-738/Ser-742 by PKRD (PubMed:12637538, PubMed:15024053, PubMed:17804414). Phosphorylated on Ser-910 upon S.enterica infection in macrophages (By similarity).</text>
</comment>
<comment type="disease" evidence="28">
    <disease id="DI-04953">
        <name>Congenital heart defects and ectodermal dysplasia</name>
        <acronym>CHDED</acronym>
        <description>An autosomal dominant syndrome characterized by atrial and/or ventricular septal congenital heart defects and variable features of ectodermal dysplasia, including sparse hair, dry skin, thin skin, fragile nails, premature loss of primary teeth, and small widely spaced teeth. Patients manifest developmental disabilities ranging from motor delay and delayed speech to global developmental retardation.</description>
        <dbReference type="MIM" id="617364"/>
    </disease>
    <text>The disease is caused by variants affecting the gene represented in this entry.</text>
</comment>
<comment type="similarity">
    <text evidence="29">Belongs to the protein kinase superfamily. CAMK Ser/Thr protein kinase family. PKD subfamily.</text>
</comment>
<comment type="online information" name="Atlas of Genetics and Cytogenetics in Oncology and Haematology">
    <link uri="https://atlasgeneticsoncology.org/gene/41860/PRKCM"/>
</comment>
<organism>
    <name type="scientific">Homo sapiens</name>
    <name type="common">Human</name>
    <dbReference type="NCBI Taxonomy" id="9606"/>
    <lineage>
        <taxon>Eukaryota</taxon>
        <taxon>Metazoa</taxon>
        <taxon>Chordata</taxon>
        <taxon>Craniata</taxon>
        <taxon>Vertebrata</taxon>
        <taxon>Euteleostomi</taxon>
        <taxon>Mammalia</taxon>
        <taxon>Eutheria</taxon>
        <taxon>Euarchontoglires</taxon>
        <taxon>Primates</taxon>
        <taxon>Haplorrhini</taxon>
        <taxon>Catarrhini</taxon>
        <taxon>Hominidae</taxon>
        <taxon>Homo</taxon>
    </lineage>
</organism>
<name>KPCD1_HUMAN</name>
<sequence length="912" mass="101704">MSAPPVLRPPSPLLPVAAAAAAAAAALVPGSGPGPAPFLAPVAAPVGGISFHLQIGLSREPVLLLQDSSGDYSLAHVREMACSIVDQKFPECGFYGMYDKILLFRHDPTSENILQLVKAASDIQEGDLIEVVLSASATFEDFQIRPHALFVHSYRAPAFCDHCGEMLWGLVRQGLKCEGCGLNYHKRCAFKIPNNCSGVRRRRLSNVSLTGVSTIRTSSAELSTSAPDEPLLQKSPSESFIGREKRSNSQSYIGRPIHLDKILMSKVKVPHTFVIHSYTRPTVCQYCKKLLKGLFRQGLQCKDCRFNCHKRCAPKVPNNCLGEVTINGDLLSPGAESDVVMEEGSDDNDSERNSGLMDDMEEAMVQDAEMAMAECQNDSGEMQDPDPDHEDANRTISPSTSNNIPLMRVVQSVKHTKRKSSTVMKEGWMVHYTSKDTLRKRHYWRLDSKCITLFQNDTGSRYYKEIPLSEILSLEPVKTSALIPNGANPHCFEITTANVVYYVGENVVNPSSPSPNNSVLTSGVGADVARMWEIAIQHALMPVIPKGSSVGTGTNLHRDISVSISVSNCQIQENVDISTVYQIFPDEVLGSGQFGIVYGGKHRKTGRDVAIKIIDKLRFPTKQESQLRNEVAILQNLHHPGVVNLECMFETPERVFVVMEKLHGDMLEMILSSEKGRLPEHITKFLITQILVALRHLHFKNIVHCDLKPENVLLASADPFPQVKLCDFGFARIIGEKSFRRSVVGTPAYLAPEVLRNKGYNRSLDMWSVGVIIYVSLSGTFPFNEDEDIHDQIQNAAFMYPPNPWKEISHEAIDLINNLLQVKMRKRYSVDKTLSHPWLQDYQTWLDLRELECKIGERYITHESDDLRWEKYAGEQGLQYPTHLINPSASHSDTPETEETEMKALGERVSIL</sequence>
<feature type="chain" id="PRO_0000055714" description="Serine/threonine-protein kinase D1">
    <location>
        <begin position="1"/>
        <end position="912"/>
    </location>
</feature>
<feature type="domain" description="PH" evidence="5">
    <location>
        <begin position="422"/>
        <end position="541"/>
    </location>
</feature>
<feature type="domain" description="Protein kinase" evidence="6">
    <location>
        <begin position="583"/>
        <end position="839"/>
    </location>
</feature>
<feature type="zinc finger region" description="Phorbol-ester/DAG-type 1" evidence="7">
    <location>
        <begin position="146"/>
        <end position="196"/>
    </location>
</feature>
<feature type="zinc finger region" description="Phorbol-ester/DAG-type 2" evidence="7">
    <location>
        <begin position="270"/>
        <end position="320"/>
    </location>
</feature>
<feature type="region of interest" description="Disordered" evidence="9">
    <location>
        <begin position="377"/>
        <end position="402"/>
    </location>
</feature>
<feature type="active site" description="Proton acceptor" evidence="6 8">
    <location>
        <position position="706"/>
    </location>
</feature>
<feature type="binding site" evidence="6">
    <location>
        <begin position="589"/>
        <end position="597"/>
    </location>
    <ligand>
        <name>ATP</name>
        <dbReference type="ChEBI" id="CHEBI:30616"/>
    </ligand>
</feature>
<feature type="binding site">
    <location>
        <position position="612"/>
    </location>
    <ligand>
        <name>ATP</name>
        <dbReference type="ChEBI" id="CHEBI:30616"/>
    </ligand>
</feature>
<feature type="modified residue" description="Phosphotyrosine" evidence="21">
    <location>
        <position position="95"/>
    </location>
</feature>
<feature type="modified residue" description="Phosphoserine" evidence="30 31">
    <location>
        <position position="205"/>
    </location>
</feature>
<feature type="modified residue" description="Phosphoserine" evidence="31">
    <location>
        <position position="208"/>
    </location>
</feature>
<feature type="modified residue" description="Phosphoserine" evidence="2">
    <location>
        <position position="219"/>
    </location>
</feature>
<feature type="modified residue" description="Phosphoserine" evidence="4">
    <location>
        <position position="223"/>
    </location>
</feature>
<feature type="modified residue" description="Phosphoserine" evidence="30">
    <location>
        <position position="345"/>
    </location>
</feature>
<feature type="modified residue" description="Phosphoserine; by MAPK13" evidence="25">
    <location>
        <position position="397"/>
    </location>
</feature>
<feature type="modified residue" description="Phosphoserine; by MAPK13" evidence="25">
    <location>
        <position position="401"/>
    </location>
</feature>
<feature type="modified residue" description="Phosphotyrosine" evidence="13">
    <location>
        <position position="432"/>
    </location>
</feature>
<feature type="modified residue" description="Phosphoserine" evidence="30">
    <location>
        <position position="448"/>
    </location>
</feature>
<feature type="modified residue" description="Phosphotyrosine; by ABL" evidence="13 15">
    <location>
        <position position="463"/>
    </location>
</feature>
<feature type="modified residue" description="Phosphoserine" evidence="30">
    <location>
        <position position="473"/>
    </location>
</feature>
<feature type="modified residue" description="Phosphotyrosine" evidence="13">
    <location>
        <position position="502"/>
    </location>
</feature>
<feature type="modified residue" description="Phosphoserine" evidence="3">
    <location>
        <position position="548"/>
    </location>
</feature>
<feature type="modified residue" description="Phosphoserine; by PKC/PRKCD" evidence="15">
    <location>
        <position position="738"/>
    </location>
</feature>
<feature type="modified residue" description="Phosphoserine; by autocatalysis and PKC/PRKCD" evidence="15">
    <location>
        <position position="742"/>
    </location>
</feature>
<feature type="modified residue" description="Phosphotyrosine" evidence="4">
    <location>
        <position position="749"/>
    </location>
</feature>
<feature type="modified residue" description="Phosphoserine; by autocatalysis" evidence="20">
    <location>
        <position position="910"/>
    </location>
</feature>
<feature type="sequence variant" id="VAR_035468" description="In a colorectal cancer sample; somatic mutation; dbSNP:rs1383618278." evidence="17">
    <original>H</original>
    <variation>Y</variation>
    <location>
        <position position="152"/>
    </location>
</feature>
<feature type="sequence variant" id="VAR_042324" evidence="18">
    <original>S</original>
    <variation>P</variation>
    <location>
        <position position="225"/>
    </location>
</feature>
<feature type="sequence variant" id="VAR_078602" description="In CHDED; dbSNP:rs1057519636." evidence="28">
    <original>L</original>
    <variation>W</variation>
    <location>
        <position position="299"/>
    </location>
</feature>
<feature type="sequence variant" id="VAR_042325" description="In dbSNP:rs55852813." evidence="18">
    <original>K</original>
    <variation>Q</variation>
    <location>
        <position position="478"/>
    </location>
</feature>
<feature type="sequence variant" id="VAR_042326" description="In a metastatic melanoma sample; somatic mutation." evidence="18">
    <original>P</original>
    <variation>S</variation>
    <location>
        <position position="585"/>
    </location>
</feature>
<feature type="sequence variant" id="VAR_078603" description="In CHDED; dbSNP:rs1057519635." evidence="28">
    <original>G</original>
    <variation>R</variation>
    <location>
        <position position="592"/>
    </location>
</feature>
<feature type="sequence variant" id="VAR_042327" description="In a lung bronchoalveolar carcinoma sample; somatic mutation." evidence="18">
    <original>R</original>
    <variation>M</variation>
    <location>
        <position position="677"/>
    </location>
</feature>
<feature type="sequence variant" id="VAR_042328" description="In dbSNP:rs34588699." evidence="18">
    <original>P</original>
    <variation>L</variation>
    <location>
        <position position="679"/>
    </location>
</feature>
<feature type="sequence variant" id="VAR_046988" description="In dbSNP:rs11161065.">
    <original>R</original>
    <variation>K</variation>
    <location>
        <position position="825"/>
    </location>
</feature>
<feature type="sequence variant" id="VAR_035469" description="In a colorectal cancer sample; somatic mutation." evidence="17">
    <original>E</original>
    <variation>K</variation>
    <location>
        <position position="857"/>
    </location>
</feature>
<feature type="sequence variant" id="VAR_042329" description="In dbSNP:rs45582934." evidence="18">
    <original>H</original>
    <variation>R</variation>
    <location>
        <position position="891"/>
    </location>
</feature>
<feature type="mutagenesis site" description="Increase in ability to bind phorbol ester, loss of ability to bind DAG." evidence="22">
    <original>P</original>
    <variation>G</variation>
    <location>
        <position position="157"/>
    </location>
</feature>
<feature type="mutagenesis site" description="No effect on ability to bind phorbol ester, slight increase in ability to bind DAG." evidence="22">
    <original>P</original>
    <variation>G</variation>
    <location>
        <position position="281"/>
    </location>
</feature>
<feature type="mutagenesis site" description="Decreased phosphorylation level when coexpressed with SRC in HeLa cells. Unchanged phosphorylation level when coexpressed with ABL." evidence="13">
    <original>Y</original>
    <variation>E</variation>
    <location>
        <position position="432"/>
    </location>
</feature>
<feature type="mutagenesis site" description="Decreased phosphorylation level when coexpressed with SRC in HeLa cells. Unchanged phosphorylation level when coexpressed with ABL. Unaltered kinase activity. Decreased kinase activity; when associated with F-463 and F-502." evidence="13">
    <original>Y</original>
    <variation>F</variation>
    <location>
        <position position="432"/>
    </location>
</feature>
<feature type="mutagenesis site" description="Constitutive activation and constitutive phosphorylation of S-738 and S-742." evidence="13">
    <original>Y</original>
    <variation>E</variation>
    <location>
        <position position="463"/>
    </location>
</feature>
<feature type="mutagenesis site" description="Decreased phosphorylation level when coexpressed with either SRC or ABL in HeLa cells. Decreased kinase activity." evidence="13">
    <original>Y</original>
    <variation>F</variation>
    <location>
        <position position="463"/>
    </location>
</feature>
<feature type="mutagenesis site" description="Loss of activation." evidence="13">
    <original>Y</original>
    <variation>E</variation>
    <location>
        <position position="502"/>
    </location>
</feature>
<feature type="mutagenesis site" description="Decreased phosphorylation level when coexpressed with SRC in HeLa cells. Unchanged phosphorylation level when coexpressed with ABL. Unaltered kinase activity. Decreased kinase activity; when associated with F-432 and F-502." evidence="13">
    <original>Y</original>
    <variation>F</variation>
    <location>
        <position position="502"/>
    </location>
</feature>
<feature type="mutagenesis site" description="Loss of kinase activity." evidence="13">
    <original>K</original>
    <variation>W</variation>
    <location>
        <position position="612"/>
    </location>
</feature>
<feature type="sequence conflict" description="In Ref. 1; CAA53384." evidence="29" ref="1">
    <original>A</original>
    <variation>R</variation>
    <location>
        <position position="135"/>
    </location>
</feature>
<feature type="sequence conflict" description="In Ref. 1; CAA53384." evidence="29" ref="1">
    <original>G</original>
    <variation>R</variation>
    <location>
        <position position="877"/>
    </location>
</feature>
<reference key="1">
    <citation type="journal article" date="1994" name="J. Biol. Chem.">
        <title>PKCmu is a novel, atypical member of the protein kinase C family.</title>
        <authorList>
            <person name="Johannes F.-J."/>
            <person name="Prestle J."/>
            <person name="Eis S."/>
            <person name="Oberhagemann P."/>
            <person name="Pfizenmaier K."/>
        </authorList>
    </citation>
    <scope>NUCLEOTIDE SEQUENCE [MRNA]</scope>
    <source>
        <tissue>Placenta</tissue>
    </source>
</reference>
<reference key="2">
    <citation type="journal article" date="2004" name="Nat. Genet.">
        <title>Complete sequencing and characterization of 21,243 full-length human cDNAs.</title>
        <authorList>
            <person name="Ota T."/>
            <person name="Suzuki Y."/>
            <person name="Nishikawa T."/>
            <person name="Otsuki T."/>
            <person name="Sugiyama T."/>
            <person name="Irie R."/>
            <person name="Wakamatsu A."/>
            <person name="Hayashi K."/>
            <person name="Sato H."/>
            <person name="Nagai K."/>
            <person name="Kimura K."/>
            <person name="Makita H."/>
            <person name="Sekine M."/>
            <person name="Obayashi M."/>
            <person name="Nishi T."/>
            <person name="Shibahara T."/>
            <person name="Tanaka T."/>
            <person name="Ishii S."/>
            <person name="Yamamoto J."/>
            <person name="Saito K."/>
            <person name="Kawai Y."/>
            <person name="Isono Y."/>
            <person name="Nakamura Y."/>
            <person name="Nagahari K."/>
            <person name="Murakami K."/>
            <person name="Yasuda T."/>
            <person name="Iwayanagi T."/>
            <person name="Wagatsuma M."/>
            <person name="Shiratori A."/>
            <person name="Sudo H."/>
            <person name="Hosoiri T."/>
            <person name="Kaku Y."/>
            <person name="Kodaira H."/>
            <person name="Kondo H."/>
            <person name="Sugawara M."/>
            <person name="Takahashi M."/>
            <person name="Kanda K."/>
            <person name="Yokoi T."/>
            <person name="Furuya T."/>
            <person name="Kikkawa E."/>
            <person name="Omura Y."/>
            <person name="Abe K."/>
            <person name="Kamihara K."/>
            <person name="Katsuta N."/>
            <person name="Sato K."/>
            <person name="Tanikawa M."/>
            <person name="Yamazaki M."/>
            <person name="Ninomiya K."/>
            <person name="Ishibashi T."/>
            <person name="Yamashita H."/>
            <person name="Murakawa K."/>
            <person name="Fujimori K."/>
            <person name="Tanai H."/>
            <person name="Kimata M."/>
            <person name="Watanabe M."/>
            <person name="Hiraoka S."/>
            <person name="Chiba Y."/>
            <person name="Ishida S."/>
            <person name="Ono Y."/>
            <person name="Takiguchi S."/>
            <person name="Watanabe S."/>
            <person name="Yosida M."/>
            <person name="Hotuta T."/>
            <person name="Kusano J."/>
            <person name="Kanehori K."/>
            <person name="Takahashi-Fujii A."/>
            <person name="Hara H."/>
            <person name="Tanase T.-O."/>
            <person name="Nomura Y."/>
            <person name="Togiya S."/>
            <person name="Komai F."/>
            <person name="Hara R."/>
            <person name="Takeuchi K."/>
            <person name="Arita M."/>
            <person name="Imose N."/>
            <person name="Musashino K."/>
            <person name="Yuuki H."/>
            <person name="Oshima A."/>
            <person name="Sasaki N."/>
            <person name="Aotsuka S."/>
            <person name="Yoshikawa Y."/>
            <person name="Matsunawa H."/>
            <person name="Ichihara T."/>
            <person name="Shiohata N."/>
            <person name="Sano S."/>
            <person name="Moriya S."/>
            <person name="Momiyama H."/>
            <person name="Satoh N."/>
            <person name="Takami S."/>
            <person name="Terashima Y."/>
            <person name="Suzuki O."/>
            <person name="Nakagawa S."/>
            <person name="Senoh A."/>
            <person name="Mizoguchi H."/>
            <person name="Goto Y."/>
            <person name="Shimizu F."/>
            <person name="Wakebe H."/>
            <person name="Hishigaki H."/>
            <person name="Watanabe T."/>
            <person name="Sugiyama A."/>
            <person name="Takemoto M."/>
            <person name="Kawakami B."/>
            <person name="Yamazaki M."/>
            <person name="Watanabe K."/>
            <person name="Kumagai A."/>
            <person name="Itakura S."/>
            <person name="Fukuzumi Y."/>
            <person name="Fujimori Y."/>
            <person name="Komiyama M."/>
            <person name="Tashiro H."/>
            <person name="Tanigami A."/>
            <person name="Fujiwara T."/>
            <person name="Ono T."/>
            <person name="Yamada K."/>
            <person name="Fujii Y."/>
            <person name="Ozaki K."/>
            <person name="Hirao M."/>
            <person name="Ohmori Y."/>
            <person name="Kawabata A."/>
            <person name="Hikiji T."/>
            <person name="Kobatake N."/>
            <person name="Inagaki H."/>
            <person name="Ikema Y."/>
            <person name="Okamoto S."/>
            <person name="Okitani R."/>
            <person name="Kawakami T."/>
            <person name="Noguchi S."/>
            <person name="Itoh T."/>
            <person name="Shigeta K."/>
            <person name="Senba T."/>
            <person name="Matsumura K."/>
            <person name="Nakajima Y."/>
            <person name="Mizuno T."/>
            <person name="Morinaga M."/>
            <person name="Sasaki M."/>
            <person name="Togashi T."/>
            <person name="Oyama M."/>
            <person name="Hata H."/>
            <person name="Watanabe M."/>
            <person name="Komatsu T."/>
            <person name="Mizushima-Sugano J."/>
            <person name="Satoh T."/>
            <person name="Shirai Y."/>
            <person name="Takahashi Y."/>
            <person name="Nakagawa K."/>
            <person name="Okumura K."/>
            <person name="Nagase T."/>
            <person name="Nomura N."/>
            <person name="Kikuchi H."/>
            <person name="Masuho Y."/>
            <person name="Yamashita R."/>
            <person name="Nakai K."/>
            <person name="Yada T."/>
            <person name="Nakamura Y."/>
            <person name="Ohara O."/>
            <person name="Isogai T."/>
            <person name="Sugano S."/>
        </authorList>
    </citation>
    <scope>NUCLEOTIDE SEQUENCE [LARGE SCALE MRNA]</scope>
    <source>
        <tissue>Testis</tissue>
    </source>
</reference>
<reference key="3">
    <citation type="journal article" date="2003" name="Nature">
        <title>The DNA sequence and analysis of human chromosome 14.</title>
        <authorList>
            <person name="Heilig R."/>
            <person name="Eckenberg R."/>
            <person name="Petit J.-L."/>
            <person name="Fonknechten N."/>
            <person name="Da Silva C."/>
            <person name="Cattolico L."/>
            <person name="Levy M."/>
            <person name="Barbe V."/>
            <person name="De Berardinis V."/>
            <person name="Ureta-Vidal A."/>
            <person name="Pelletier E."/>
            <person name="Vico V."/>
            <person name="Anthouard V."/>
            <person name="Rowen L."/>
            <person name="Madan A."/>
            <person name="Qin S."/>
            <person name="Sun H."/>
            <person name="Du H."/>
            <person name="Pepin K."/>
            <person name="Artiguenave F."/>
            <person name="Robert C."/>
            <person name="Cruaud C."/>
            <person name="Bruels T."/>
            <person name="Jaillon O."/>
            <person name="Friedlander L."/>
            <person name="Samson G."/>
            <person name="Brottier P."/>
            <person name="Cure S."/>
            <person name="Segurens B."/>
            <person name="Aniere F."/>
            <person name="Samain S."/>
            <person name="Crespeau H."/>
            <person name="Abbasi N."/>
            <person name="Aiach N."/>
            <person name="Boscus D."/>
            <person name="Dickhoff R."/>
            <person name="Dors M."/>
            <person name="Dubois I."/>
            <person name="Friedman C."/>
            <person name="Gouyvenoux M."/>
            <person name="James R."/>
            <person name="Madan A."/>
            <person name="Mairey-Estrada B."/>
            <person name="Mangenot S."/>
            <person name="Martins N."/>
            <person name="Menard M."/>
            <person name="Oztas S."/>
            <person name="Ratcliffe A."/>
            <person name="Shaffer T."/>
            <person name="Trask B."/>
            <person name="Vacherie B."/>
            <person name="Bellemere C."/>
            <person name="Belser C."/>
            <person name="Besnard-Gonnet M."/>
            <person name="Bartol-Mavel D."/>
            <person name="Boutard M."/>
            <person name="Briez-Silla S."/>
            <person name="Combette S."/>
            <person name="Dufosse-Laurent V."/>
            <person name="Ferron C."/>
            <person name="Lechaplais C."/>
            <person name="Louesse C."/>
            <person name="Muselet D."/>
            <person name="Magdelenat G."/>
            <person name="Pateau E."/>
            <person name="Petit E."/>
            <person name="Sirvain-Trukniewicz P."/>
            <person name="Trybou A."/>
            <person name="Vega-Czarny N."/>
            <person name="Bataille E."/>
            <person name="Bluet E."/>
            <person name="Bordelais I."/>
            <person name="Dubois M."/>
            <person name="Dumont C."/>
            <person name="Guerin T."/>
            <person name="Haffray S."/>
            <person name="Hammadi R."/>
            <person name="Muanga J."/>
            <person name="Pellouin V."/>
            <person name="Robert D."/>
            <person name="Wunderle E."/>
            <person name="Gauguet G."/>
            <person name="Roy A."/>
            <person name="Sainte-Marthe L."/>
            <person name="Verdier J."/>
            <person name="Verdier-Discala C."/>
            <person name="Hillier L.W."/>
            <person name="Fulton L."/>
            <person name="McPherson J."/>
            <person name="Matsuda F."/>
            <person name="Wilson R."/>
            <person name="Scarpelli C."/>
            <person name="Gyapay G."/>
            <person name="Wincker P."/>
            <person name="Saurin W."/>
            <person name="Quetier F."/>
            <person name="Waterston R."/>
            <person name="Hood L."/>
            <person name="Weissenbach J."/>
        </authorList>
    </citation>
    <scope>NUCLEOTIDE SEQUENCE [LARGE SCALE GENOMIC DNA]</scope>
</reference>
<reference key="4">
    <citation type="submission" date="2005-09" db="EMBL/GenBank/DDBJ databases">
        <authorList>
            <person name="Mural R.J."/>
            <person name="Istrail S."/>
            <person name="Sutton G.G."/>
            <person name="Florea L."/>
            <person name="Halpern A.L."/>
            <person name="Mobarry C.M."/>
            <person name="Lippert R."/>
            <person name="Walenz B."/>
            <person name="Shatkay H."/>
            <person name="Dew I."/>
            <person name="Miller J.R."/>
            <person name="Flanigan M.J."/>
            <person name="Edwards N.J."/>
            <person name="Bolanos R."/>
            <person name="Fasulo D."/>
            <person name="Halldorsson B.V."/>
            <person name="Hannenhalli S."/>
            <person name="Turner R."/>
            <person name="Yooseph S."/>
            <person name="Lu F."/>
            <person name="Nusskern D.R."/>
            <person name="Shue B.C."/>
            <person name="Zheng X.H."/>
            <person name="Zhong F."/>
            <person name="Delcher A.L."/>
            <person name="Huson D.H."/>
            <person name="Kravitz S.A."/>
            <person name="Mouchard L."/>
            <person name="Reinert K."/>
            <person name="Remington K.A."/>
            <person name="Clark A.G."/>
            <person name="Waterman M.S."/>
            <person name="Eichler E.E."/>
            <person name="Adams M.D."/>
            <person name="Hunkapiller M.W."/>
            <person name="Myers E.W."/>
            <person name="Venter J.C."/>
        </authorList>
    </citation>
    <scope>NUCLEOTIDE SEQUENCE [LARGE SCALE GENOMIC DNA]</scope>
</reference>
<reference key="5">
    <citation type="journal article" date="1999" name="EMBO J.">
        <title>Cell-type specific phosphorylation of threonines T654 and T669 by PKD defines the signal capacity of the EGF receptor.</title>
        <authorList>
            <person name="Bagowski C.P."/>
            <person name="Stein-Gerlach M."/>
            <person name="Choidas A."/>
            <person name="Ullrich A."/>
        </authorList>
    </citation>
    <scope>FUNCTION IN EGFR PHOSPHORYLATION</scope>
</reference>
<reference key="6">
    <citation type="journal article" date="2000" name="J. Biol. Chem.">
        <title>Proteolytic cleavage and activation of protein kinase C [micro] by caspase-3 in the apoptotic response of cells to 1-beta -D-arabinofuranosylcytosine and other genotoxic agents.</title>
        <authorList>
            <person name="Endo K."/>
            <person name="Oki E."/>
            <person name="Biedermann V."/>
            <person name="Kojima H."/>
            <person name="Yoshida K."/>
            <person name="Johannes F.J."/>
            <person name="Kufe D."/>
            <person name="Datta R."/>
        </authorList>
    </citation>
    <scope>FUNCTION IN APOPTOSIS</scope>
</reference>
<reference key="7">
    <citation type="journal article" date="2003" name="Biochem. Biophys. Res. Commun.">
        <title>Centaurin-alpha(1) associates with and is phosphorylated by isoforms of protein kinase C.</title>
        <authorList>
            <person name="Zemlickova E."/>
            <person name="Dubois T."/>
            <person name="Kerai P."/>
            <person name="Clokie S."/>
            <person name="Cronshaw A.D."/>
            <person name="Wakefield R.I.D."/>
            <person name="Johannes F.-J."/>
            <person name="Aitken A."/>
        </authorList>
    </citation>
    <scope>INTERACTION WITH ADAP1</scope>
</reference>
<reference key="8">
    <citation type="journal article" date="2003" name="EMBO J.">
        <title>Protein kinase D mediates a stress-induced NF-kappaB activation and survival pathway.</title>
        <authorList>
            <person name="Storz P."/>
            <person name="Toker A."/>
        </authorList>
    </citation>
    <scope>FUNCTION IN CELL SURVIVAL</scope>
</reference>
<reference key="9">
    <citation type="journal article" date="2003" name="J. Biol. Chem.">
        <title>Tyrosine phosphorylation of protein kinase D in the pleckstrin homology domain leads to activation.</title>
        <authorList>
            <person name="Storz P."/>
            <person name="Doppler H."/>
            <person name="Johannes F.J."/>
            <person name="Toker A."/>
        </authorList>
    </citation>
    <scope>FUNCTION</scope>
    <scope>ACTIVITY REGULATION</scope>
    <scope>PHOSPHORYLATION AT TYR-432; TYR-463 AND TYR-502</scope>
    <scope>MUTAGENESIS OF TYR-432; TYR-463; TYR-502 AND LYS-612</scope>
</reference>
<reference key="10">
    <citation type="journal article" date="2004" name="J. Biol. Chem.">
        <title>Interaction between protein kinase Cmu and the vanilloid receptor type 1.</title>
        <authorList>
            <person name="Wang Y."/>
            <person name="Kedei N."/>
            <person name="Wang M."/>
            <person name="Wang Q.J."/>
            <person name="Huppler A.R."/>
            <person name="Toth A."/>
            <person name="Tran R."/>
            <person name="Blumberg P.M."/>
        </authorList>
    </citation>
    <scope>FUNCTION IN PHOSPHORYLATION OF TRPV1</scope>
</reference>
<reference key="11">
    <citation type="journal article" date="2004" name="Mol. Cell. Biol.">
        <title>Protein kinase Cdelta selectively regulates protein kinase D-dependent activation of NF-kappaB in oxidative stress signaling.</title>
        <authorList>
            <person name="Storz P."/>
            <person name="Doppler H."/>
            <person name="Toker A."/>
        </authorList>
    </citation>
    <scope>PHOSPHORYLATION AT TYR-463; SER-738 AND SER-742</scope>
</reference>
<reference key="12">
    <citation type="journal article" date="2007" name="Cell Death Differ.">
        <title>DAP kinase regulates JNK signaling by binding and activating protein kinase D under oxidative stress.</title>
        <authorList>
            <person name="Eisenberg-Lerner A."/>
            <person name="Kimchi A."/>
        </authorList>
    </citation>
    <scope>PHOSPHORYLATION BY DAPK1</scope>
    <scope>INTERACTION WITH DAPK1</scope>
    <scope>PHOSPHORYLATION AT SER-910</scope>
    <scope>ACTIVITY REGULATION</scope>
</reference>
<reference key="13">
    <citation type="journal article" date="2007" name="J. Biol. Chem.">
        <title>A novel tyrosine phosphorylation site in protein kinase D contributes to oxidative stress-mediated activation.</title>
        <authorList>
            <person name="Doppler H."/>
            <person name="Storz P."/>
        </authorList>
    </citation>
    <scope>PHOSPHORYLATION AT TYR-95</scope>
</reference>
<reference key="14">
    <citation type="journal article" date="2007" name="J. Immunol.">
        <title>Protein kinase D interaction with TLR5 is required for inflammatory signaling in response to bacterial flagellin.</title>
        <authorList>
            <person name="Ivison S.M."/>
            <person name="Graham N.R."/>
            <person name="Bernales C.Q."/>
            <person name="Kifayet A."/>
            <person name="Ng N."/>
            <person name="Shobab L.A."/>
            <person name="Steiner T.S."/>
        </authorList>
    </citation>
    <scope>FUNCTION IN INNATE IMMUNITY</scope>
</reference>
<reference key="15">
    <citation type="journal article" date="2008" name="Biochem. J.">
        <title>Selective binding of phorbol esters and diacylglycerol by individual C1 domains of the PKD family.</title>
        <authorList>
            <person name="Chen J."/>
            <person name="Deng F."/>
            <person name="Li J."/>
            <person name="Wang Q.J."/>
        </authorList>
    </citation>
    <scope>ACTIVITY REGULATION</scope>
    <scope>PHORBOL-ESTER BINDING</scope>
    <scope>SUBCELLULAR LOCATION</scope>
    <scope>MUTAGENESIS OF PRO-157 AND PRO-281</scope>
</reference>
<reference key="16">
    <citation type="journal article" date="2008" name="J. Biol. Chem.">
        <title>Protein kinase D-dependent phosphorylation and nuclear export of histone deacetylase 5 mediates vascular endothelial growth factor-induced gene expression and angiogenesis.</title>
        <authorList>
            <person name="Ha C.H."/>
            <person name="Wang W."/>
            <person name="Jhun B.S."/>
            <person name="Wong C."/>
            <person name="Hausser A."/>
            <person name="Pfizenmaier K."/>
            <person name="McKinsey T.A."/>
            <person name="Olson E.N."/>
            <person name="Jin Z.G."/>
        </authorList>
    </citation>
    <scope>FUNCTION IN PHOSPHORYLATION OF HDAC5</scope>
    <scope>FUNCTION IN ANGIOGENESIS</scope>
</reference>
<reference key="17">
    <citation type="journal article" date="2008" name="Proc. Natl. Acad. Sci. U.S.A.">
        <title>Control of endothelial cell proliferation and migration by VEGF signaling to histone deacetylase 7.</title>
        <authorList>
            <person name="Wang S."/>
            <person name="Li X."/>
            <person name="Parra M."/>
            <person name="Verdin E."/>
            <person name="Bassel-Duby R."/>
            <person name="Olson E.N."/>
        </authorList>
    </citation>
    <scope>FUNCTION IN PHOSPHORYLATION OF HDAC7</scope>
</reference>
<reference key="18">
    <citation type="journal article" date="2009" name="Anal. Chem.">
        <title>Lys-N and trypsin cover complementary parts of the phosphoproteome in a refined SCX-based approach.</title>
        <authorList>
            <person name="Gauci S."/>
            <person name="Helbig A.O."/>
            <person name="Slijper M."/>
            <person name="Krijgsveld J."/>
            <person name="Heck A.J."/>
            <person name="Mohammed S."/>
        </authorList>
    </citation>
    <scope>IDENTIFICATION BY MASS SPECTROMETRY [LARGE SCALE ANALYSIS]</scope>
</reference>
<reference key="19">
    <citation type="journal article" date="2009" name="Cell">
        <title>Regulation of PKD by the MAPK p38delta in insulin secretion and glucose homeostasis.</title>
        <authorList>
            <person name="Sumara G."/>
            <person name="Formentini I."/>
            <person name="Collins S."/>
            <person name="Sumara I."/>
            <person name="Windak R."/>
            <person name="Bodenmiller B."/>
            <person name="Ramracheya R."/>
            <person name="Caille D."/>
            <person name="Jiang H."/>
            <person name="Platt K.A."/>
            <person name="Meda P."/>
            <person name="Aebersold R."/>
            <person name="Rorsman P."/>
            <person name="Ricci R."/>
        </authorList>
    </citation>
    <scope>PHOSPHORYLATION AT SER-397 AND SER-401</scope>
    <scope>INTERACTION WITH MAPK13</scope>
    <scope>FUNCTION</scope>
</reference>
<reference key="20">
    <citation type="journal article" date="2009" name="Mol. Biol. Cell">
        <title>Protein kinase D controls the integrity of Golgi apparatus and the maintenance of dendritic arborization in hippocampal neurons.</title>
        <authorList>
            <person name="Czoendoer K."/>
            <person name="Ellwanger K."/>
            <person name="Fuchs Y.F."/>
            <person name="Lutz S."/>
            <person name="Gulyas M."/>
            <person name="Mansuy I.M."/>
            <person name="Hausser A."/>
            <person name="Pfizenmaier K."/>
            <person name="Schlett K."/>
        </authorList>
    </citation>
    <scope>FUNCTION IN ANGIOGENESIS</scope>
</reference>
<reference key="21">
    <citation type="journal article" date="2002" name="Trends Cell Biol.">
        <title>Protein kinase D: an intracellular traffic regulator on the move.</title>
        <authorList>
            <person name="Van Lint J."/>
            <person name="Rykx A."/>
            <person name="Maeda Y."/>
            <person name="Vantus T."/>
            <person name="Sturany S."/>
            <person name="Malhotra V."/>
            <person name="Vandenheede J.R."/>
            <person name="Seufferlein T."/>
        </authorList>
    </citation>
    <scope>REVIEW ON FUNCTION IN TRAFFICKING</scope>
</reference>
<reference key="22">
    <citation type="journal article" date="2005" name="J. Biol. Chem.">
        <title>Protein kinase D signaling.</title>
        <authorList>
            <person name="Rozengurt E."/>
            <person name="Rey O."/>
            <person name="Waldron R.T."/>
        </authorList>
    </citation>
    <scope>REVIEW ON FUNCTION</scope>
</reference>
<reference key="23">
    <citation type="journal article" date="2008" name="Circ. Res.">
        <title>Protein kinase d in the cardiovascular system: emerging roles in health and disease.</title>
        <authorList>
            <person name="Avkiran M."/>
            <person name="Rowland A.J."/>
            <person name="Cuello F."/>
            <person name="Haworth R.S."/>
        </authorList>
    </citation>
    <scope>REVIEW ON FUNCTION</scope>
</reference>
<reference key="24">
    <citation type="journal article" date="2009" name="Mol. Cell. Proteomics">
        <title>Large-scale proteomics analysis of the human kinome.</title>
        <authorList>
            <person name="Oppermann F.S."/>
            <person name="Gnad F."/>
            <person name="Olsen J.V."/>
            <person name="Hornberger R."/>
            <person name="Greff Z."/>
            <person name="Keri G."/>
            <person name="Mann M."/>
            <person name="Daub H."/>
        </authorList>
    </citation>
    <scope>PHOSPHORYLATION [LARGE SCALE ANALYSIS] AT SER-205; SER-345; SER-448 AND SER-473</scope>
    <scope>IDENTIFICATION BY MASS SPECTROMETRY [LARGE SCALE ANALYSIS]</scope>
</reference>
<reference key="25">
    <citation type="journal article" date="2009" name="Mol. Cells">
        <title>Protein kinase D1, a new molecular player in VEGF signaling and angiogenesis.</title>
        <authorList>
            <person name="Ha C.H."/>
            <person name="Jin Z.G."/>
        </authorList>
    </citation>
    <scope>REVIEW ON FUNCTION IN ANGIOGENESIS</scope>
</reference>
<reference key="26">
    <citation type="journal article" date="2011" name="Physiology (Bethesda)">
        <title>Protein kinase D signaling: multiple biological functions in health and disease.</title>
        <authorList>
            <person name="Rozengurt E."/>
        </authorList>
    </citation>
    <scope>REVIEW ON FUNCTION</scope>
</reference>
<reference key="27">
    <citation type="journal article" date="2011" name="Sci. Signal.">
        <title>System-wide temporal characterization of the proteome and phosphoproteome of human embryonic stem cell differentiation.</title>
        <authorList>
            <person name="Rigbolt K.T."/>
            <person name="Prokhorova T.A."/>
            <person name="Akimov V."/>
            <person name="Henningsen J."/>
            <person name="Johansen P.T."/>
            <person name="Kratchmarova I."/>
            <person name="Kassem M."/>
            <person name="Mann M."/>
            <person name="Olsen J.V."/>
            <person name="Blagoev B."/>
        </authorList>
    </citation>
    <scope>PHOSPHORYLATION [LARGE SCALE ANALYSIS] AT SER-205 AND SER-208</scope>
    <scope>IDENTIFICATION BY MASS SPECTROMETRY [LARGE SCALE ANALYSIS]</scope>
</reference>
<reference key="28">
    <citation type="journal article" date="2014" name="Elife">
        <title>A KRAS-directed transcriptional silencing pathway that mediates the CpG island methylator phenotype.</title>
        <authorList>
            <person name="Serra R.W."/>
            <person name="Fang M."/>
            <person name="Park S.M."/>
            <person name="Hutchinson L."/>
            <person name="Green M.R."/>
        </authorList>
    </citation>
    <scope>FUNCTION</scope>
    <scope>INTERACTION WITH USP28</scope>
    <scope>INDUCTION</scope>
</reference>
<reference key="29">
    <citation type="journal article" date="2006" name="Science">
        <title>The consensus coding sequences of human breast and colorectal cancers.</title>
        <authorList>
            <person name="Sjoeblom T."/>
            <person name="Jones S."/>
            <person name="Wood L.D."/>
            <person name="Parsons D.W."/>
            <person name="Lin J."/>
            <person name="Barber T.D."/>
            <person name="Mandelker D."/>
            <person name="Leary R.J."/>
            <person name="Ptak J."/>
            <person name="Silliman N."/>
            <person name="Szabo S."/>
            <person name="Buckhaults P."/>
            <person name="Farrell C."/>
            <person name="Meeh P."/>
            <person name="Markowitz S.D."/>
            <person name="Willis J."/>
            <person name="Dawson D."/>
            <person name="Willson J.K.V."/>
            <person name="Gazdar A.F."/>
            <person name="Hartigan J."/>
            <person name="Wu L."/>
            <person name="Liu C."/>
            <person name="Parmigiani G."/>
            <person name="Park B.H."/>
            <person name="Bachman K.E."/>
            <person name="Papadopoulos N."/>
            <person name="Vogelstein B."/>
            <person name="Kinzler K.W."/>
            <person name="Velculescu V.E."/>
        </authorList>
    </citation>
    <scope>VARIANTS [LARGE SCALE ANALYSIS] TYR-152 AND LYS-857</scope>
</reference>
<reference key="30">
    <citation type="journal article" date="2007" name="Nature">
        <title>Patterns of somatic mutation in human cancer genomes.</title>
        <authorList>
            <person name="Greenman C."/>
            <person name="Stephens P."/>
            <person name="Smith R."/>
            <person name="Dalgliesh G.L."/>
            <person name="Hunter C."/>
            <person name="Bignell G."/>
            <person name="Davies H."/>
            <person name="Teague J."/>
            <person name="Butler A."/>
            <person name="Stevens C."/>
            <person name="Edkins S."/>
            <person name="O'Meara S."/>
            <person name="Vastrik I."/>
            <person name="Schmidt E.E."/>
            <person name="Avis T."/>
            <person name="Barthorpe S."/>
            <person name="Bhamra G."/>
            <person name="Buck G."/>
            <person name="Choudhury B."/>
            <person name="Clements J."/>
            <person name="Cole J."/>
            <person name="Dicks E."/>
            <person name="Forbes S."/>
            <person name="Gray K."/>
            <person name="Halliday K."/>
            <person name="Harrison R."/>
            <person name="Hills K."/>
            <person name="Hinton J."/>
            <person name="Jenkinson A."/>
            <person name="Jones D."/>
            <person name="Menzies A."/>
            <person name="Mironenko T."/>
            <person name="Perry J."/>
            <person name="Raine K."/>
            <person name="Richardson D."/>
            <person name="Shepherd R."/>
            <person name="Small A."/>
            <person name="Tofts C."/>
            <person name="Varian J."/>
            <person name="Webb T."/>
            <person name="West S."/>
            <person name="Widaa S."/>
            <person name="Yates A."/>
            <person name="Cahill D.P."/>
            <person name="Louis D.N."/>
            <person name="Goldstraw P."/>
            <person name="Nicholson A.G."/>
            <person name="Brasseur F."/>
            <person name="Looijenga L."/>
            <person name="Weber B.L."/>
            <person name="Chiew Y.-E."/>
            <person name="DeFazio A."/>
            <person name="Greaves M.F."/>
            <person name="Green A.R."/>
            <person name="Campbell P."/>
            <person name="Birney E."/>
            <person name="Easton D.F."/>
            <person name="Chenevix-Trench G."/>
            <person name="Tan M.-H."/>
            <person name="Khoo S.K."/>
            <person name="Teh B.T."/>
            <person name="Yuen S.T."/>
            <person name="Leung S.Y."/>
            <person name="Wooster R."/>
            <person name="Futreal P.A."/>
            <person name="Stratton M.R."/>
        </authorList>
    </citation>
    <scope>VARIANTS [LARGE SCALE ANALYSIS] PRO-225; GLN-478; SER-585; MET-677; LEU-679 AND ARG-891</scope>
</reference>
<reference key="31">
    <citation type="journal article" date="2016" name="Nat. Genet.">
        <title>Distinct genetic architectures for syndromic and nonsyndromic congenital heart defects identified by exome sequencing.</title>
        <authorList>
            <consortium name="INTERVAL Study"/>
            <consortium name="UK10K Consortium"/>
            <consortium name="Deciphering Developmental Disorders Study"/>
            <person name="Sifrim A."/>
            <person name="Hitz M.P."/>
            <person name="Wilsdon A."/>
            <person name="Breckpot J."/>
            <person name="Turki S.H."/>
            <person name="Thienpont B."/>
            <person name="McRae J."/>
            <person name="Fitzgerald T.W."/>
            <person name="Singh T."/>
            <person name="Swaminathan G.J."/>
            <person name="Prigmore E."/>
            <person name="Rajan D."/>
            <person name="Abdul-Khaliq H."/>
            <person name="Banka S."/>
            <person name="Bauer U.M."/>
            <person name="Bentham J."/>
            <person name="Berger F."/>
            <person name="Bhattacharya S."/>
            <person name="Bu'Lock F."/>
            <person name="Canham N."/>
            <person name="Colgiu I.G."/>
            <person name="Cosgrove C."/>
            <person name="Cox H."/>
            <person name="Daehnert I."/>
            <person name="Daly A."/>
            <person name="Danesh J."/>
            <person name="Fryer A."/>
            <person name="Gewillig M."/>
            <person name="Hobson E."/>
            <person name="Hoff K."/>
            <person name="Homfray T."/>
            <person name="Kahlert A.K."/>
            <person name="Ketley A."/>
            <person name="Kramer H.H."/>
            <person name="Lachlan K."/>
            <person name="Lampe A.K."/>
            <person name="Louw J.J."/>
            <person name="Manickara A.K."/>
            <person name="Manase D."/>
            <person name="McCarthy K.P."/>
            <person name="Metcalfe K."/>
            <person name="Moore C."/>
            <person name="Newbury-Ecob R."/>
            <person name="Omer S.O."/>
            <person name="Ouwehand W.H."/>
            <person name="Park S.M."/>
            <person name="Parker M.J."/>
            <person name="Pickardt T."/>
            <person name="Pollard M.O."/>
            <person name="Robert L."/>
            <person name="Roberts D.J."/>
            <person name="Sambrook J."/>
            <person name="Setchfield K."/>
            <person name="Stiller B."/>
            <person name="Thornborough C."/>
            <person name="Toka O."/>
            <person name="Watkins H."/>
            <person name="Williams D."/>
            <person name="Wright M."/>
            <person name="Mital S."/>
            <person name="Daubeney P.E."/>
            <person name="Keavney B."/>
            <person name="Goodship J."/>
            <person name="Abu-Sulaiman R.M."/>
            <person name="Klaassen S."/>
            <person name="Wright C.F."/>
            <person name="Firth H.V."/>
            <person name="Barrett J.C."/>
            <person name="Devriendt K."/>
            <person name="FitzPatrick D.R."/>
            <person name="Brook J.D."/>
            <person name="Hurles M.E."/>
        </authorList>
    </citation>
    <scope>INVOLVEMENT IN CHDED</scope>
    <scope>VARIANTS CHDED TRP-299 AND ARG-592</scope>
</reference>
<protein>
    <recommendedName>
        <fullName>Serine/threonine-protein kinase D1</fullName>
        <ecNumber>2.7.11.13</ecNumber>
    </recommendedName>
    <alternativeName>
        <fullName>Protein kinase C mu type</fullName>
    </alternativeName>
    <alternativeName>
        <fullName>Protein kinase D</fullName>
    </alternativeName>
    <alternativeName>
        <fullName>nPKC-D1</fullName>
    </alternativeName>
    <alternativeName>
        <fullName>nPKC-mu</fullName>
    </alternativeName>
</protein>
<keyword id="KW-0037">Angiogenesis</keyword>
<keyword id="KW-0053">Apoptosis</keyword>
<keyword id="KW-0067">ATP-binding</keyword>
<keyword id="KW-1003">Cell membrane</keyword>
<keyword id="KW-0963">Cytoplasm</keyword>
<keyword id="KW-0221">Differentiation</keyword>
<keyword id="KW-0225">Disease variant</keyword>
<keyword id="KW-0038">Ectodermal dysplasia</keyword>
<keyword id="KW-0333">Golgi apparatus</keyword>
<keyword id="KW-0391">Immunity</keyword>
<keyword id="KW-0395">Inflammatory response</keyword>
<keyword id="KW-0399">Innate immunity</keyword>
<keyword id="KW-0418">Kinase</keyword>
<keyword id="KW-0460">Magnesium</keyword>
<keyword id="KW-0472">Membrane</keyword>
<keyword id="KW-0479">Metal-binding</keyword>
<keyword id="KW-0524">Neurogenesis</keyword>
<keyword id="KW-0547">Nucleotide-binding</keyword>
<keyword id="KW-0597">Phosphoprotein</keyword>
<keyword id="KW-1267">Proteomics identification</keyword>
<keyword id="KW-1185">Reference proteome</keyword>
<keyword id="KW-0677">Repeat</keyword>
<keyword id="KW-0723">Serine/threonine-protein kinase</keyword>
<keyword id="KW-0808">Transferase</keyword>
<keyword id="KW-0862">Zinc</keyword>
<keyword id="KW-0863">Zinc-finger</keyword>
<proteinExistence type="evidence at protein level"/>
<accession>Q15139</accession>
<accession>A6NL64</accession>
<accession>B2RAF6</accession>